<organism>
    <name type="scientific">Thermobifida fusca (strain YX)</name>
    <dbReference type="NCBI Taxonomy" id="269800"/>
    <lineage>
        <taxon>Bacteria</taxon>
        <taxon>Bacillati</taxon>
        <taxon>Actinomycetota</taxon>
        <taxon>Actinomycetes</taxon>
        <taxon>Streptosporangiales</taxon>
        <taxon>Nocardiopsidaceae</taxon>
        <taxon>Thermobifida</taxon>
    </lineage>
</organism>
<dbReference type="EC" id="4.3.3.6" evidence="1"/>
<dbReference type="EC" id="3.5.1.2" evidence="1"/>
<dbReference type="EMBL" id="CP000088">
    <property type="protein sequence ID" value="AAZ56130.1"/>
    <property type="molecule type" value="Genomic_DNA"/>
</dbReference>
<dbReference type="RefSeq" id="WP_011292520.1">
    <property type="nucleotide sequence ID" value="NC_007333.1"/>
</dbReference>
<dbReference type="SMR" id="Q47N39"/>
<dbReference type="STRING" id="269800.Tfu_2097"/>
<dbReference type="MEROPS" id="C26.A32"/>
<dbReference type="KEGG" id="tfu:Tfu_2097"/>
<dbReference type="eggNOG" id="COG0311">
    <property type="taxonomic scope" value="Bacteria"/>
</dbReference>
<dbReference type="HOGENOM" id="CLU_069674_2_0_11"/>
<dbReference type="OrthoDB" id="9810320at2"/>
<dbReference type="UniPathway" id="UPA00245"/>
<dbReference type="GO" id="GO:0005829">
    <property type="term" value="C:cytosol"/>
    <property type="evidence" value="ECO:0007669"/>
    <property type="project" value="TreeGrafter"/>
</dbReference>
<dbReference type="GO" id="GO:1903600">
    <property type="term" value="C:glutaminase complex"/>
    <property type="evidence" value="ECO:0007669"/>
    <property type="project" value="TreeGrafter"/>
</dbReference>
<dbReference type="GO" id="GO:0004359">
    <property type="term" value="F:glutaminase activity"/>
    <property type="evidence" value="ECO:0007669"/>
    <property type="project" value="UniProtKB-UniRule"/>
</dbReference>
<dbReference type="GO" id="GO:0036381">
    <property type="term" value="F:pyridoxal 5'-phosphate synthase (glutamine hydrolysing) activity"/>
    <property type="evidence" value="ECO:0007669"/>
    <property type="project" value="UniProtKB-UniRule"/>
</dbReference>
<dbReference type="GO" id="GO:0006543">
    <property type="term" value="P:glutamine catabolic process"/>
    <property type="evidence" value="ECO:0007669"/>
    <property type="project" value="UniProtKB-UniRule"/>
</dbReference>
<dbReference type="GO" id="GO:0042823">
    <property type="term" value="P:pyridoxal phosphate biosynthetic process"/>
    <property type="evidence" value="ECO:0007669"/>
    <property type="project" value="UniProtKB-UniRule"/>
</dbReference>
<dbReference type="GO" id="GO:0008614">
    <property type="term" value="P:pyridoxine metabolic process"/>
    <property type="evidence" value="ECO:0007669"/>
    <property type="project" value="TreeGrafter"/>
</dbReference>
<dbReference type="CDD" id="cd01749">
    <property type="entry name" value="GATase1_PB"/>
    <property type="match status" value="1"/>
</dbReference>
<dbReference type="FunFam" id="3.40.50.880:FF:000010">
    <property type="entry name" value="uncharacterized protein LOC100176842 isoform X2"/>
    <property type="match status" value="1"/>
</dbReference>
<dbReference type="Gene3D" id="3.40.50.880">
    <property type="match status" value="1"/>
</dbReference>
<dbReference type="HAMAP" id="MF_01615">
    <property type="entry name" value="PdxT"/>
    <property type="match status" value="1"/>
</dbReference>
<dbReference type="InterPro" id="IPR029062">
    <property type="entry name" value="Class_I_gatase-like"/>
</dbReference>
<dbReference type="InterPro" id="IPR002161">
    <property type="entry name" value="PdxT/SNO"/>
</dbReference>
<dbReference type="InterPro" id="IPR021196">
    <property type="entry name" value="PdxT/SNO_CS"/>
</dbReference>
<dbReference type="NCBIfam" id="TIGR03800">
    <property type="entry name" value="PLP_synth_Pdx2"/>
    <property type="match status" value="1"/>
</dbReference>
<dbReference type="PANTHER" id="PTHR31559">
    <property type="entry name" value="PYRIDOXAL 5'-PHOSPHATE SYNTHASE SUBUNIT SNO"/>
    <property type="match status" value="1"/>
</dbReference>
<dbReference type="PANTHER" id="PTHR31559:SF0">
    <property type="entry name" value="PYRIDOXAL 5'-PHOSPHATE SYNTHASE SUBUNIT SNO1-RELATED"/>
    <property type="match status" value="1"/>
</dbReference>
<dbReference type="Pfam" id="PF01174">
    <property type="entry name" value="SNO"/>
    <property type="match status" value="1"/>
</dbReference>
<dbReference type="PIRSF" id="PIRSF005639">
    <property type="entry name" value="Glut_amidoT_SNO"/>
    <property type="match status" value="1"/>
</dbReference>
<dbReference type="SUPFAM" id="SSF52317">
    <property type="entry name" value="Class I glutamine amidotransferase-like"/>
    <property type="match status" value="1"/>
</dbReference>
<dbReference type="PROSITE" id="PS01236">
    <property type="entry name" value="PDXT_SNO_1"/>
    <property type="match status" value="1"/>
</dbReference>
<dbReference type="PROSITE" id="PS51130">
    <property type="entry name" value="PDXT_SNO_2"/>
    <property type="match status" value="1"/>
</dbReference>
<reference key="1">
    <citation type="journal article" date="2007" name="J. Bacteriol.">
        <title>Genome sequence and analysis of the soil cellulolytic actinomycete Thermobifida fusca YX.</title>
        <authorList>
            <person name="Lykidis A."/>
            <person name="Mavromatis K."/>
            <person name="Ivanova N."/>
            <person name="Anderson I."/>
            <person name="Land M."/>
            <person name="DiBartolo G."/>
            <person name="Martinez M."/>
            <person name="Lapidus A."/>
            <person name="Lucas S."/>
            <person name="Copeland A."/>
            <person name="Richardson P."/>
            <person name="Wilson D.B."/>
            <person name="Kyrpides N."/>
        </authorList>
    </citation>
    <scope>NUCLEOTIDE SEQUENCE [LARGE SCALE GENOMIC DNA]</scope>
    <source>
        <strain>YX</strain>
    </source>
</reference>
<gene>
    <name evidence="1" type="primary">pdxT</name>
    <name type="ordered locus">Tfu_2097</name>
</gene>
<comment type="function">
    <text evidence="1">Catalyzes the hydrolysis of glutamine to glutamate and ammonia as part of the biosynthesis of pyridoxal 5'-phosphate. The resulting ammonia molecule is channeled to the active site of PdxS.</text>
</comment>
<comment type="catalytic activity">
    <reaction evidence="1">
        <text>aldehydo-D-ribose 5-phosphate + D-glyceraldehyde 3-phosphate + L-glutamine = pyridoxal 5'-phosphate + L-glutamate + phosphate + 3 H2O + H(+)</text>
        <dbReference type="Rhea" id="RHEA:31507"/>
        <dbReference type="ChEBI" id="CHEBI:15377"/>
        <dbReference type="ChEBI" id="CHEBI:15378"/>
        <dbReference type="ChEBI" id="CHEBI:29985"/>
        <dbReference type="ChEBI" id="CHEBI:43474"/>
        <dbReference type="ChEBI" id="CHEBI:58273"/>
        <dbReference type="ChEBI" id="CHEBI:58359"/>
        <dbReference type="ChEBI" id="CHEBI:59776"/>
        <dbReference type="ChEBI" id="CHEBI:597326"/>
        <dbReference type="EC" id="4.3.3.6"/>
    </reaction>
</comment>
<comment type="catalytic activity">
    <reaction evidence="1">
        <text>L-glutamine + H2O = L-glutamate + NH4(+)</text>
        <dbReference type="Rhea" id="RHEA:15889"/>
        <dbReference type="ChEBI" id="CHEBI:15377"/>
        <dbReference type="ChEBI" id="CHEBI:28938"/>
        <dbReference type="ChEBI" id="CHEBI:29985"/>
        <dbReference type="ChEBI" id="CHEBI:58359"/>
        <dbReference type="EC" id="3.5.1.2"/>
    </reaction>
</comment>
<comment type="pathway">
    <text evidence="1">Cofactor biosynthesis; pyridoxal 5'-phosphate biosynthesis.</text>
</comment>
<comment type="subunit">
    <text evidence="1">In the presence of PdxS, forms a dodecamer of heterodimers. Only shows activity in the heterodimer.</text>
</comment>
<comment type="similarity">
    <text evidence="1">Belongs to the glutaminase PdxT/SNO family.</text>
</comment>
<sequence>MSSVPPTIGVLALQGDVREHIHALEQAGARARRIRRPDELDSIDGLILPGGESTTMGRLAAVFGLLTPLRERIAAGLPAYGTCAGMIMLADRLADGAPGQQTIGGIDMTVRRNAFGRQVASFEGTVEMTGVDGGPVEAVFIRAPWVESTGPGVQVLGRISRGDTAGRIVAVRQGRLLATSFHPELTGDTRVHRLFVDMVKG</sequence>
<accession>Q47N39</accession>
<proteinExistence type="inferred from homology"/>
<protein>
    <recommendedName>
        <fullName evidence="1">Pyridoxal 5'-phosphate synthase subunit PdxT</fullName>
        <ecNumber evidence="1">4.3.3.6</ecNumber>
    </recommendedName>
    <alternativeName>
        <fullName evidence="1">Pdx2</fullName>
    </alternativeName>
    <alternativeName>
        <fullName evidence="1">Pyridoxal 5'-phosphate synthase glutaminase subunit</fullName>
        <ecNumber evidence="1">3.5.1.2</ecNumber>
    </alternativeName>
</protein>
<name>PDXT_THEFY</name>
<feature type="chain" id="PRO_0000255840" description="Pyridoxal 5'-phosphate synthase subunit PdxT">
    <location>
        <begin position="1"/>
        <end position="201"/>
    </location>
</feature>
<feature type="active site" description="Nucleophile" evidence="1">
    <location>
        <position position="83"/>
    </location>
</feature>
<feature type="active site" description="Charge relay system" evidence="1">
    <location>
        <position position="182"/>
    </location>
</feature>
<feature type="active site" description="Charge relay system" evidence="1">
    <location>
        <position position="184"/>
    </location>
</feature>
<feature type="binding site" evidence="1">
    <location>
        <begin position="51"/>
        <end position="53"/>
    </location>
    <ligand>
        <name>L-glutamine</name>
        <dbReference type="ChEBI" id="CHEBI:58359"/>
    </ligand>
</feature>
<feature type="binding site" evidence="1">
    <location>
        <position position="112"/>
    </location>
    <ligand>
        <name>L-glutamine</name>
        <dbReference type="ChEBI" id="CHEBI:58359"/>
    </ligand>
</feature>
<feature type="binding site" evidence="1">
    <location>
        <begin position="141"/>
        <end position="142"/>
    </location>
    <ligand>
        <name>L-glutamine</name>
        <dbReference type="ChEBI" id="CHEBI:58359"/>
    </ligand>
</feature>
<keyword id="KW-0315">Glutamine amidotransferase</keyword>
<keyword id="KW-0378">Hydrolase</keyword>
<keyword id="KW-0456">Lyase</keyword>
<keyword id="KW-0663">Pyridoxal phosphate</keyword>
<evidence type="ECO:0000255" key="1">
    <source>
        <dbReference type="HAMAP-Rule" id="MF_01615"/>
    </source>
</evidence>